<reference key="1">
    <citation type="journal article" date="2008" name="PLoS Genet.">
        <title>Complete genome sequence of the N2-fixing broad host range endophyte Klebsiella pneumoniae 342 and virulence predictions verified in mice.</title>
        <authorList>
            <person name="Fouts D.E."/>
            <person name="Tyler H.L."/>
            <person name="DeBoy R.T."/>
            <person name="Daugherty S."/>
            <person name="Ren Q."/>
            <person name="Badger J.H."/>
            <person name="Durkin A.S."/>
            <person name="Huot H."/>
            <person name="Shrivastava S."/>
            <person name="Kothari S."/>
            <person name="Dodson R.J."/>
            <person name="Mohamoud Y."/>
            <person name="Khouri H."/>
            <person name="Roesch L.F.W."/>
            <person name="Krogfelt K.A."/>
            <person name="Struve C."/>
            <person name="Triplett E.W."/>
            <person name="Methe B.A."/>
        </authorList>
    </citation>
    <scope>NUCLEOTIDE SEQUENCE [LARGE SCALE GENOMIC DNA]</scope>
    <source>
        <strain>342</strain>
    </source>
</reference>
<accession>B5XP95</accession>
<organism>
    <name type="scientific">Klebsiella pneumoniae (strain 342)</name>
    <dbReference type="NCBI Taxonomy" id="507522"/>
    <lineage>
        <taxon>Bacteria</taxon>
        <taxon>Pseudomonadati</taxon>
        <taxon>Pseudomonadota</taxon>
        <taxon>Gammaproteobacteria</taxon>
        <taxon>Enterobacterales</taxon>
        <taxon>Enterobacteriaceae</taxon>
        <taxon>Klebsiella/Raoultella group</taxon>
        <taxon>Klebsiella</taxon>
        <taxon>Klebsiella pneumoniae complex</taxon>
    </lineage>
</organism>
<proteinExistence type="inferred from homology"/>
<sequence>MSSNAQVRRRAVQAARGESPFDLLLVEAQIVDMATGEIRPADVGIVGEMIASVHPRGSRTDAHEVRSLAGGYLSPGLMDTHVHLESSHLPPERYAEIVLTQGTTAVFWDPHELANVLGVEGVRYAVDASRHLPLQVMVAAPSSVPSTPGLEMSGADFAGAEMETMLGWPEVRGVAEVMDMHGVLHGSERMQEIVQAGLNSGKLIEGHARGLSGADLQAYLAAGVTSDHELTSADDALEKLRAGLTIEIRGSHPYLLPDIVAALKTLPHLSSQITVCTDDVPPDMLLEKGGIIALLNLLIEHGLPAVDALRFATLNAAIRLQRHDLGLIAAGRRADLVVFDSLEKLVAREVYVGGERLAHAGRLLKPIAPAPGVTPPRDTLPIAPLRADDFVLRVQGIRHGVARLRHIRGARFTQWGEVEVQVRDGKVQLPAGFSLIWVKHRHGRHQATPQIALLEGWGELRGAIATSYSHDSHNLVVLGRDADDMALAANQLIASGGGMALAQQGEILAHVAMPIAGMLSDLPAAELARQFRELRDLSSQVADWEPPYRVFKAIEGTCLACNAGPHLTDLGLTDGGSRQIVDPLIACRETPEPTDHNNNPQGA</sequence>
<dbReference type="EC" id="3.5.4.2" evidence="1"/>
<dbReference type="EMBL" id="CP000964">
    <property type="protein sequence ID" value="ACI11456.1"/>
    <property type="molecule type" value="Genomic_DNA"/>
</dbReference>
<dbReference type="SMR" id="B5XP95"/>
<dbReference type="KEGG" id="kpe:KPK_1614"/>
<dbReference type="HOGENOM" id="CLU_027935_0_0_6"/>
<dbReference type="Proteomes" id="UP000001734">
    <property type="component" value="Chromosome"/>
</dbReference>
<dbReference type="GO" id="GO:0000034">
    <property type="term" value="F:adenine deaminase activity"/>
    <property type="evidence" value="ECO:0007669"/>
    <property type="project" value="UniProtKB-UniRule"/>
</dbReference>
<dbReference type="GO" id="GO:0006146">
    <property type="term" value="P:adenine catabolic process"/>
    <property type="evidence" value="ECO:0007669"/>
    <property type="project" value="InterPro"/>
</dbReference>
<dbReference type="Gene3D" id="3.20.20.140">
    <property type="entry name" value="Metal-dependent hydrolases"/>
    <property type="match status" value="1"/>
</dbReference>
<dbReference type="Gene3D" id="2.30.40.10">
    <property type="entry name" value="Urease, subunit C, domain 1"/>
    <property type="match status" value="1"/>
</dbReference>
<dbReference type="HAMAP" id="MF_01518">
    <property type="entry name" value="Adenine_deamin"/>
    <property type="match status" value="1"/>
</dbReference>
<dbReference type="InterPro" id="IPR006679">
    <property type="entry name" value="Adenine_deam"/>
</dbReference>
<dbReference type="InterPro" id="IPR026912">
    <property type="entry name" value="Adenine_deam_C"/>
</dbReference>
<dbReference type="InterPro" id="IPR006680">
    <property type="entry name" value="Amidohydro-rel"/>
</dbReference>
<dbReference type="InterPro" id="IPR011059">
    <property type="entry name" value="Metal-dep_hydrolase_composite"/>
</dbReference>
<dbReference type="InterPro" id="IPR032466">
    <property type="entry name" value="Metal_Hydrolase"/>
</dbReference>
<dbReference type="PANTHER" id="PTHR11113:SF2">
    <property type="entry name" value="ADENINE DEAMINASE"/>
    <property type="match status" value="1"/>
</dbReference>
<dbReference type="PANTHER" id="PTHR11113">
    <property type="entry name" value="N-ACETYLGLUCOSAMINE-6-PHOSPHATE DEACETYLASE"/>
    <property type="match status" value="1"/>
</dbReference>
<dbReference type="Pfam" id="PF13382">
    <property type="entry name" value="Adenine_deam_C"/>
    <property type="match status" value="1"/>
</dbReference>
<dbReference type="Pfam" id="PF01979">
    <property type="entry name" value="Amidohydro_1"/>
    <property type="match status" value="1"/>
</dbReference>
<dbReference type="SUPFAM" id="SSF51338">
    <property type="entry name" value="Composite domain of metallo-dependent hydrolases"/>
    <property type="match status" value="1"/>
</dbReference>
<dbReference type="SUPFAM" id="SSF51556">
    <property type="entry name" value="Metallo-dependent hydrolases"/>
    <property type="match status" value="1"/>
</dbReference>
<name>ADEC_KLEP3</name>
<comment type="catalytic activity">
    <reaction evidence="1">
        <text>adenine + H2O + H(+) = hypoxanthine + NH4(+)</text>
        <dbReference type="Rhea" id="RHEA:23688"/>
        <dbReference type="ChEBI" id="CHEBI:15377"/>
        <dbReference type="ChEBI" id="CHEBI:15378"/>
        <dbReference type="ChEBI" id="CHEBI:16708"/>
        <dbReference type="ChEBI" id="CHEBI:17368"/>
        <dbReference type="ChEBI" id="CHEBI:28938"/>
        <dbReference type="EC" id="3.5.4.2"/>
    </reaction>
</comment>
<comment type="cofactor">
    <cofactor evidence="1">
        <name>Mn(2+)</name>
        <dbReference type="ChEBI" id="CHEBI:29035"/>
    </cofactor>
</comment>
<comment type="subunit">
    <text evidence="1">Homodimer.</text>
</comment>
<comment type="similarity">
    <text evidence="1">Belongs to the metallo-dependent hydrolases superfamily. Adenine deaminase family.</text>
</comment>
<feature type="chain" id="PRO_1000146241" description="Adenine deaminase">
    <location>
        <begin position="1"/>
        <end position="603"/>
    </location>
</feature>
<gene>
    <name evidence="1" type="primary">ade</name>
    <name type="ordered locus">KPK_1614</name>
</gene>
<keyword id="KW-0378">Hydrolase</keyword>
<keyword id="KW-0464">Manganese</keyword>
<protein>
    <recommendedName>
        <fullName evidence="1">Adenine deaminase</fullName>
        <shortName evidence="1">Adenase</shortName>
        <shortName evidence="1">Adenine aminase</shortName>
        <ecNumber evidence="1">3.5.4.2</ecNumber>
    </recommendedName>
</protein>
<evidence type="ECO:0000255" key="1">
    <source>
        <dbReference type="HAMAP-Rule" id="MF_01518"/>
    </source>
</evidence>